<comment type="function">
    <text evidence="1">Binds to DNA and alters its conformation. May be involved in regulation of gene expression, nucleoid organization and DNA protection.</text>
</comment>
<comment type="subunit">
    <text evidence="1">Homodimer.</text>
</comment>
<comment type="subcellular location">
    <subcellularLocation>
        <location evidence="1">Cytoplasm</location>
        <location evidence="1">Nucleoid</location>
    </subcellularLocation>
</comment>
<comment type="similarity">
    <text evidence="1">Belongs to the YbaB/EbfC family.</text>
</comment>
<sequence>MQPGGDMSALLAQAQQMQQKLLEAQQQLANSEVHGQAGGGLVKVVVKGSGEVIGVTIDPKVVDPDDIETLQDLIVGAMRDASQQVTKMAQERLGALAGAMRPPAPPAAPPGAPGMPGMPGMPGAPGAPPVPGI</sequence>
<organism>
    <name type="scientific">Mycobacterium tuberculosis (strain ATCC 25177 / H37Ra)</name>
    <dbReference type="NCBI Taxonomy" id="419947"/>
    <lineage>
        <taxon>Bacteria</taxon>
        <taxon>Bacillati</taxon>
        <taxon>Actinomycetota</taxon>
        <taxon>Actinomycetes</taxon>
        <taxon>Mycobacteriales</taxon>
        <taxon>Mycobacteriaceae</taxon>
        <taxon>Mycobacterium</taxon>
        <taxon>Mycobacterium tuberculosis complex</taxon>
    </lineage>
</organism>
<proteinExistence type="inferred from homology"/>
<feature type="chain" id="PRO_1000003779" description="Nucleoid-associated protein MRA_3753">
    <location>
        <begin position="1"/>
        <end position="133"/>
    </location>
</feature>
<feature type="region of interest" description="Disordered" evidence="2">
    <location>
        <begin position="98"/>
        <end position="133"/>
    </location>
</feature>
<feature type="compositionally biased region" description="Pro residues" evidence="2">
    <location>
        <begin position="102"/>
        <end position="113"/>
    </location>
</feature>
<gene>
    <name type="ordered locus">MRA_3753</name>
</gene>
<reference key="1">
    <citation type="journal article" date="2008" name="PLoS ONE">
        <title>Genetic basis of virulence attenuation revealed by comparative genomic analysis of Mycobacterium tuberculosis strain H37Ra versus H37Rv.</title>
        <authorList>
            <person name="Zheng H."/>
            <person name="Lu L."/>
            <person name="Wang B."/>
            <person name="Pu S."/>
            <person name="Zhang X."/>
            <person name="Zhu G."/>
            <person name="Shi W."/>
            <person name="Zhang L."/>
            <person name="Wang H."/>
            <person name="Wang S."/>
            <person name="Zhao G."/>
            <person name="Zhang Y."/>
        </authorList>
    </citation>
    <scope>NUCLEOTIDE SEQUENCE [LARGE SCALE GENOMIC DNA]</scope>
    <source>
        <strain>ATCC 25177 / H37Ra</strain>
    </source>
</reference>
<name>Y3753_MYCTA</name>
<evidence type="ECO:0000255" key="1">
    <source>
        <dbReference type="HAMAP-Rule" id="MF_00274"/>
    </source>
</evidence>
<evidence type="ECO:0000256" key="2">
    <source>
        <dbReference type="SAM" id="MobiDB-lite"/>
    </source>
</evidence>
<accession>A5U942</accession>
<keyword id="KW-0963">Cytoplasm</keyword>
<keyword id="KW-0238">DNA-binding</keyword>
<keyword id="KW-1185">Reference proteome</keyword>
<protein>
    <recommendedName>
        <fullName evidence="1">Nucleoid-associated protein MRA_3753</fullName>
    </recommendedName>
</protein>
<dbReference type="EMBL" id="CP000611">
    <property type="protein sequence ID" value="ABQ75542.1"/>
    <property type="molecule type" value="Genomic_DNA"/>
</dbReference>
<dbReference type="RefSeq" id="WP_003420408.1">
    <property type="nucleotide sequence ID" value="NZ_CP016972.1"/>
</dbReference>
<dbReference type="SMR" id="A5U942"/>
<dbReference type="KEGG" id="mra:MRA_3753"/>
<dbReference type="eggNOG" id="COG0718">
    <property type="taxonomic scope" value="Bacteria"/>
</dbReference>
<dbReference type="HOGENOM" id="CLU_140930_4_0_11"/>
<dbReference type="Proteomes" id="UP000001988">
    <property type="component" value="Chromosome"/>
</dbReference>
<dbReference type="GO" id="GO:0043590">
    <property type="term" value="C:bacterial nucleoid"/>
    <property type="evidence" value="ECO:0007669"/>
    <property type="project" value="UniProtKB-UniRule"/>
</dbReference>
<dbReference type="GO" id="GO:0005829">
    <property type="term" value="C:cytosol"/>
    <property type="evidence" value="ECO:0007669"/>
    <property type="project" value="TreeGrafter"/>
</dbReference>
<dbReference type="GO" id="GO:0003677">
    <property type="term" value="F:DNA binding"/>
    <property type="evidence" value="ECO:0007669"/>
    <property type="project" value="UniProtKB-UniRule"/>
</dbReference>
<dbReference type="Gene3D" id="3.30.1310.10">
    <property type="entry name" value="Nucleoid-associated protein YbaB-like domain"/>
    <property type="match status" value="1"/>
</dbReference>
<dbReference type="HAMAP" id="MF_00274">
    <property type="entry name" value="DNA_YbaB_EbfC"/>
    <property type="match status" value="1"/>
</dbReference>
<dbReference type="InterPro" id="IPR036894">
    <property type="entry name" value="YbaB-like_sf"/>
</dbReference>
<dbReference type="InterPro" id="IPR004401">
    <property type="entry name" value="YbaB/EbfC"/>
</dbReference>
<dbReference type="NCBIfam" id="TIGR00103">
    <property type="entry name" value="DNA_YbaB_EbfC"/>
    <property type="match status" value="1"/>
</dbReference>
<dbReference type="PANTHER" id="PTHR33449">
    <property type="entry name" value="NUCLEOID-ASSOCIATED PROTEIN YBAB"/>
    <property type="match status" value="1"/>
</dbReference>
<dbReference type="PANTHER" id="PTHR33449:SF1">
    <property type="entry name" value="NUCLEOID-ASSOCIATED PROTEIN YBAB"/>
    <property type="match status" value="1"/>
</dbReference>
<dbReference type="Pfam" id="PF02575">
    <property type="entry name" value="YbaB_DNA_bd"/>
    <property type="match status" value="1"/>
</dbReference>
<dbReference type="PIRSF" id="PIRSF004555">
    <property type="entry name" value="UCP004555"/>
    <property type="match status" value="1"/>
</dbReference>
<dbReference type="SUPFAM" id="SSF82607">
    <property type="entry name" value="YbaB-like"/>
    <property type="match status" value="1"/>
</dbReference>